<organism>
    <name type="scientific">Escherichia coli O157:H7</name>
    <dbReference type="NCBI Taxonomy" id="83334"/>
    <lineage>
        <taxon>Bacteria</taxon>
        <taxon>Pseudomonadati</taxon>
        <taxon>Pseudomonadota</taxon>
        <taxon>Gammaproteobacteria</taxon>
        <taxon>Enterobacterales</taxon>
        <taxon>Enterobacteriaceae</taxon>
        <taxon>Escherichia</taxon>
    </lineage>
</organism>
<proteinExistence type="inferred from homology"/>
<dbReference type="EC" id="1.6.5.-" evidence="2"/>
<dbReference type="EC" id="1.7.1.17" evidence="2"/>
<dbReference type="EMBL" id="AE005174">
    <property type="protein sequence ID" value="AAG56367.1"/>
    <property type="molecule type" value="Genomic_DNA"/>
</dbReference>
<dbReference type="EMBL" id="BA000007">
    <property type="protein sequence ID" value="BAB35437.1"/>
    <property type="molecule type" value="Genomic_DNA"/>
</dbReference>
<dbReference type="PIR" id="C85738">
    <property type="entry name" value="C85738"/>
</dbReference>
<dbReference type="PIR" id="F90880">
    <property type="entry name" value="F90880"/>
</dbReference>
<dbReference type="RefSeq" id="NP_310041.1">
    <property type="nucleotide sequence ID" value="NC_002695.1"/>
</dbReference>
<dbReference type="RefSeq" id="WP_000048968.1">
    <property type="nucleotide sequence ID" value="NZ_VOAI01000022.1"/>
</dbReference>
<dbReference type="SMR" id="Q8X9S9"/>
<dbReference type="STRING" id="155864.Z2315"/>
<dbReference type="GeneID" id="917215"/>
<dbReference type="KEGG" id="ece:Z2315"/>
<dbReference type="KEGG" id="ecs:ECs_2014"/>
<dbReference type="PATRIC" id="fig|386585.9.peg.2116"/>
<dbReference type="eggNOG" id="COG1182">
    <property type="taxonomic scope" value="Bacteria"/>
</dbReference>
<dbReference type="HOGENOM" id="CLU_088964_0_0_6"/>
<dbReference type="OMA" id="FIARPRV"/>
<dbReference type="BRENDA" id="1.7.1.6">
    <property type="organism ID" value="2026"/>
</dbReference>
<dbReference type="Proteomes" id="UP000000558">
    <property type="component" value="Chromosome"/>
</dbReference>
<dbReference type="Proteomes" id="UP000002519">
    <property type="component" value="Chromosome"/>
</dbReference>
<dbReference type="GO" id="GO:0009055">
    <property type="term" value="F:electron transfer activity"/>
    <property type="evidence" value="ECO:0007669"/>
    <property type="project" value="UniProtKB-UniRule"/>
</dbReference>
<dbReference type="GO" id="GO:0010181">
    <property type="term" value="F:FMN binding"/>
    <property type="evidence" value="ECO:0007669"/>
    <property type="project" value="UniProtKB-UniRule"/>
</dbReference>
<dbReference type="GO" id="GO:0016652">
    <property type="term" value="F:oxidoreductase activity, acting on NAD(P)H as acceptor"/>
    <property type="evidence" value="ECO:0007669"/>
    <property type="project" value="UniProtKB-UniRule"/>
</dbReference>
<dbReference type="GO" id="GO:0016655">
    <property type="term" value="F:oxidoreductase activity, acting on NAD(P)H, quinone or similar compound as acceptor"/>
    <property type="evidence" value="ECO:0007669"/>
    <property type="project" value="InterPro"/>
</dbReference>
<dbReference type="FunFam" id="3.40.50.360:FF:000010">
    <property type="entry name" value="FMN-dependent NADH-azoreductase"/>
    <property type="match status" value="1"/>
</dbReference>
<dbReference type="Gene3D" id="3.40.50.360">
    <property type="match status" value="1"/>
</dbReference>
<dbReference type="HAMAP" id="MF_01216">
    <property type="entry name" value="Azoreductase_type1"/>
    <property type="match status" value="1"/>
</dbReference>
<dbReference type="InterPro" id="IPR003680">
    <property type="entry name" value="Flavodoxin_fold"/>
</dbReference>
<dbReference type="InterPro" id="IPR029039">
    <property type="entry name" value="Flavoprotein-like_sf"/>
</dbReference>
<dbReference type="InterPro" id="IPR050104">
    <property type="entry name" value="FMN-dep_NADH:Q_OxRdtase_AzoR1"/>
</dbReference>
<dbReference type="InterPro" id="IPR023048">
    <property type="entry name" value="NADH:quinone_OxRdtase_FMN_depd"/>
</dbReference>
<dbReference type="PANTHER" id="PTHR43741">
    <property type="entry name" value="FMN-DEPENDENT NADH-AZOREDUCTASE 1"/>
    <property type="match status" value="1"/>
</dbReference>
<dbReference type="PANTHER" id="PTHR43741:SF2">
    <property type="entry name" value="FMN-DEPENDENT NADH:QUINONE OXIDOREDUCTASE"/>
    <property type="match status" value="1"/>
</dbReference>
<dbReference type="Pfam" id="PF02525">
    <property type="entry name" value="Flavodoxin_2"/>
    <property type="match status" value="1"/>
</dbReference>
<dbReference type="SUPFAM" id="SSF52218">
    <property type="entry name" value="Flavoproteins"/>
    <property type="match status" value="1"/>
</dbReference>
<feature type="initiator methionine" description="Removed" evidence="1">
    <location>
        <position position="1"/>
    </location>
</feature>
<feature type="chain" id="PRO_0000166312" description="FMN-dependent NADH:quinone oxidoreductase">
    <location>
        <begin position="2"/>
        <end position="201"/>
    </location>
</feature>
<feature type="binding site" evidence="2">
    <location>
        <position position="10"/>
    </location>
    <ligand>
        <name>FMN</name>
        <dbReference type="ChEBI" id="CHEBI:58210"/>
    </ligand>
</feature>
<feature type="binding site" evidence="2">
    <location>
        <begin position="16"/>
        <end position="18"/>
    </location>
    <ligand>
        <name>FMN</name>
        <dbReference type="ChEBI" id="CHEBI:58210"/>
    </ligand>
</feature>
<feature type="binding site" evidence="2">
    <location>
        <begin position="96"/>
        <end position="99"/>
    </location>
    <ligand>
        <name>FMN</name>
        <dbReference type="ChEBI" id="CHEBI:58210"/>
    </ligand>
</feature>
<feature type="binding site" evidence="2">
    <location>
        <begin position="140"/>
        <end position="143"/>
    </location>
    <ligand>
        <name>FMN</name>
        <dbReference type="ChEBI" id="CHEBI:58210"/>
    </ligand>
</feature>
<protein>
    <recommendedName>
        <fullName evidence="2">FMN-dependent NADH:quinone oxidoreductase</fullName>
        <ecNumber evidence="2">1.6.5.-</ecNumber>
    </recommendedName>
    <alternativeName>
        <fullName evidence="2">Azo-dye reductase</fullName>
    </alternativeName>
    <alternativeName>
        <fullName evidence="2">FMN-dependent NADH-azo compound oxidoreductase</fullName>
    </alternativeName>
    <alternativeName>
        <fullName evidence="2">FMN-dependent NADH-azoreductase</fullName>
        <ecNumber evidence="2">1.7.1.17</ecNumber>
    </alternativeName>
</protein>
<gene>
    <name evidence="2" type="primary">azoR</name>
    <name type="ordered locus">Z2315</name>
    <name type="ordered locus">ECs2014</name>
</gene>
<name>AZOR_ECO57</name>
<accession>Q8X9S9</accession>
<comment type="function">
    <text evidence="2">Quinone reductase that provides resistance to thiol-specific stress caused by electrophilic quinones.</text>
</comment>
<comment type="function">
    <text evidence="2">Also exhibits azoreductase activity. Catalyzes the reductive cleavage of the azo bond in aromatic azo compounds to the corresponding amines.</text>
</comment>
<comment type="catalytic activity">
    <reaction evidence="2">
        <text>2 a quinone + NADH + H(+) = 2 a 1,4-benzosemiquinone + NAD(+)</text>
        <dbReference type="Rhea" id="RHEA:65952"/>
        <dbReference type="ChEBI" id="CHEBI:15378"/>
        <dbReference type="ChEBI" id="CHEBI:57540"/>
        <dbReference type="ChEBI" id="CHEBI:57945"/>
        <dbReference type="ChEBI" id="CHEBI:132124"/>
        <dbReference type="ChEBI" id="CHEBI:134225"/>
    </reaction>
</comment>
<comment type="catalytic activity">
    <reaction evidence="2">
        <text>N,N-dimethyl-1,4-phenylenediamine + anthranilate + 2 NAD(+) = 2-(4-dimethylaminophenyl)diazenylbenzoate + 2 NADH + 2 H(+)</text>
        <dbReference type="Rhea" id="RHEA:55872"/>
        <dbReference type="ChEBI" id="CHEBI:15378"/>
        <dbReference type="ChEBI" id="CHEBI:15783"/>
        <dbReference type="ChEBI" id="CHEBI:16567"/>
        <dbReference type="ChEBI" id="CHEBI:57540"/>
        <dbReference type="ChEBI" id="CHEBI:57945"/>
        <dbReference type="ChEBI" id="CHEBI:71579"/>
        <dbReference type="EC" id="1.7.1.17"/>
    </reaction>
</comment>
<comment type="cofactor">
    <cofactor evidence="2">
        <name>FMN</name>
        <dbReference type="ChEBI" id="CHEBI:58210"/>
    </cofactor>
    <text evidence="2">Binds 1 FMN per subunit.</text>
</comment>
<comment type="subunit">
    <text evidence="2">Homodimer.</text>
</comment>
<comment type="similarity">
    <text evidence="2">Belongs to the azoreductase type 1 family.</text>
</comment>
<keyword id="KW-0285">Flavoprotein</keyword>
<keyword id="KW-0288">FMN</keyword>
<keyword id="KW-0520">NAD</keyword>
<keyword id="KW-0560">Oxidoreductase</keyword>
<keyword id="KW-1185">Reference proteome</keyword>
<sequence length="201" mass="21646">MSKVLVLKSSILAGYSQSNQLSDYFVEQWREKHSADEITVRDLAANPIPVLDGELVGALRPSDAPLTTRQQEALALSDELIAELKAHDVIVIAAPMYNFNISTQLKNYFDLVARAGVTFRYTENGPEGLVTGKKAIVITSRGGIHKDGPTDLVTPYLSTFLGFIGITDVKFVFAEGIAYGPEMAAKAQSDAKAAIDSIVAA</sequence>
<evidence type="ECO:0000250" key="1"/>
<evidence type="ECO:0000255" key="2">
    <source>
        <dbReference type="HAMAP-Rule" id="MF_01216"/>
    </source>
</evidence>
<reference key="1">
    <citation type="journal article" date="2001" name="Nature">
        <title>Genome sequence of enterohaemorrhagic Escherichia coli O157:H7.</title>
        <authorList>
            <person name="Perna N.T."/>
            <person name="Plunkett G. III"/>
            <person name="Burland V."/>
            <person name="Mau B."/>
            <person name="Glasner J.D."/>
            <person name="Rose D.J."/>
            <person name="Mayhew G.F."/>
            <person name="Evans P.S."/>
            <person name="Gregor J."/>
            <person name="Kirkpatrick H.A."/>
            <person name="Posfai G."/>
            <person name="Hackett J."/>
            <person name="Klink S."/>
            <person name="Boutin A."/>
            <person name="Shao Y."/>
            <person name="Miller L."/>
            <person name="Grotbeck E.J."/>
            <person name="Davis N.W."/>
            <person name="Lim A."/>
            <person name="Dimalanta E.T."/>
            <person name="Potamousis K."/>
            <person name="Apodaca J."/>
            <person name="Anantharaman T.S."/>
            <person name="Lin J."/>
            <person name="Yen G."/>
            <person name="Schwartz D.C."/>
            <person name="Welch R.A."/>
            <person name="Blattner F.R."/>
        </authorList>
    </citation>
    <scope>NUCLEOTIDE SEQUENCE [LARGE SCALE GENOMIC DNA]</scope>
    <source>
        <strain>O157:H7 / EDL933 / ATCC 700927 / EHEC</strain>
    </source>
</reference>
<reference key="2">
    <citation type="journal article" date="2001" name="DNA Res.">
        <title>Complete genome sequence of enterohemorrhagic Escherichia coli O157:H7 and genomic comparison with a laboratory strain K-12.</title>
        <authorList>
            <person name="Hayashi T."/>
            <person name="Makino K."/>
            <person name="Ohnishi M."/>
            <person name="Kurokawa K."/>
            <person name="Ishii K."/>
            <person name="Yokoyama K."/>
            <person name="Han C.-G."/>
            <person name="Ohtsubo E."/>
            <person name="Nakayama K."/>
            <person name="Murata T."/>
            <person name="Tanaka M."/>
            <person name="Tobe T."/>
            <person name="Iida T."/>
            <person name="Takami H."/>
            <person name="Honda T."/>
            <person name="Sasakawa C."/>
            <person name="Ogasawara N."/>
            <person name="Yasunaga T."/>
            <person name="Kuhara S."/>
            <person name="Shiba T."/>
            <person name="Hattori M."/>
            <person name="Shinagawa H."/>
        </authorList>
    </citation>
    <scope>NUCLEOTIDE SEQUENCE [LARGE SCALE GENOMIC DNA]</scope>
    <source>
        <strain>O157:H7 / Sakai / RIMD 0509952 / EHEC</strain>
    </source>
</reference>